<dbReference type="EC" id="4.2.1.20" evidence="1"/>
<dbReference type="EMBL" id="AL590842">
    <property type="protein sequence ID" value="CAL20832.1"/>
    <property type="molecule type" value="Genomic_DNA"/>
</dbReference>
<dbReference type="EMBL" id="AE009952">
    <property type="protein sequence ID" value="AAM85612.1"/>
    <property type="molecule type" value="Genomic_DNA"/>
</dbReference>
<dbReference type="EMBL" id="AE017042">
    <property type="protein sequence ID" value="AAS62217.1"/>
    <property type="molecule type" value="Genomic_DNA"/>
</dbReference>
<dbReference type="PIR" id="AE0268">
    <property type="entry name" value="AE0268"/>
</dbReference>
<dbReference type="RefSeq" id="WP_002210634.1">
    <property type="nucleotide sequence ID" value="NZ_WUCM01000001.1"/>
</dbReference>
<dbReference type="RefSeq" id="YP_002347174.1">
    <property type="nucleotide sequence ID" value="NC_003143.1"/>
</dbReference>
<dbReference type="SMR" id="Q8ZEH0"/>
<dbReference type="IntAct" id="Q8ZEH0">
    <property type="interactions" value="1"/>
</dbReference>
<dbReference type="STRING" id="214092.YPO2203"/>
<dbReference type="PaxDb" id="214092-YPO2203"/>
<dbReference type="EnsemblBacteria" id="AAS62217">
    <property type="protein sequence ID" value="AAS62217"/>
    <property type="gene ID" value="YP_2001"/>
</dbReference>
<dbReference type="GeneID" id="57976464"/>
<dbReference type="KEGG" id="ype:YPO2203"/>
<dbReference type="KEGG" id="ypk:y2047"/>
<dbReference type="KEGG" id="ypm:YP_2001"/>
<dbReference type="PATRIC" id="fig|214092.21.peg.2600"/>
<dbReference type="eggNOG" id="COG0159">
    <property type="taxonomic scope" value="Bacteria"/>
</dbReference>
<dbReference type="HOGENOM" id="CLU_016734_0_4_6"/>
<dbReference type="OMA" id="LVMTYWN"/>
<dbReference type="OrthoDB" id="9804578at2"/>
<dbReference type="UniPathway" id="UPA00035">
    <property type="reaction ID" value="UER00044"/>
</dbReference>
<dbReference type="Proteomes" id="UP000000815">
    <property type="component" value="Chromosome"/>
</dbReference>
<dbReference type="Proteomes" id="UP000001019">
    <property type="component" value="Chromosome"/>
</dbReference>
<dbReference type="Proteomes" id="UP000002490">
    <property type="component" value="Chromosome"/>
</dbReference>
<dbReference type="GO" id="GO:0005829">
    <property type="term" value="C:cytosol"/>
    <property type="evidence" value="ECO:0000318"/>
    <property type="project" value="GO_Central"/>
</dbReference>
<dbReference type="GO" id="GO:0004834">
    <property type="term" value="F:tryptophan synthase activity"/>
    <property type="evidence" value="ECO:0000318"/>
    <property type="project" value="GO_Central"/>
</dbReference>
<dbReference type="GO" id="GO:0000162">
    <property type="term" value="P:L-tryptophan biosynthetic process"/>
    <property type="evidence" value="ECO:0000318"/>
    <property type="project" value="GO_Central"/>
</dbReference>
<dbReference type="CDD" id="cd04724">
    <property type="entry name" value="Tryptophan_synthase_alpha"/>
    <property type="match status" value="1"/>
</dbReference>
<dbReference type="FunFam" id="3.20.20.70:FF:000037">
    <property type="entry name" value="Tryptophan synthase alpha chain"/>
    <property type="match status" value="1"/>
</dbReference>
<dbReference type="Gene3D" id="3.20.20.70">
    <property type="entry name" value="Aldolase class I"/>
    <property type="match status" value="1"/>
</dbReference>
<dbReference type="HAMAP" id="MF_00131">
    <property type="entry name" value="Trp_synth_alpha"/>
    <property type="match status" value="1"/>
</dbReference>
<dbReference type="InterPro" id="IPR013785">
    <property type="entry name" value="Aldolase_TIM"/>
</dbReference>
<dbReference type="InterPro" id="IPR011060">
    <property type="entry name" value="RibuloseP-bd_barrel"/>
</dbReference>
<dbReference type="InterPro" id="IPR018204">
    <property type="entry name" value="Trp_synthase_alpha_AS"/>
</dbReference>
<dbReference type="InterPro" id="IPR002028">
    <property type="entry name" value="Trp_synthase_suA"/>
</dbReference>
<dbReference type="NCBIfam" id="TIGR00262">
    <property type="entry name" value="trpA"/>
    <property type="match status" value="1"/>
</dbReference>
<dbReference type="PANTHER" id="PTHR43406:SF1">
    <property type="entry name" value="TRYPTOPHAN SYNTHASE ALPHA CHAIN, CHLOROPLASTIC"/>
    <property type="match status" value="1"/>
</dbReference>
<dbReference type="PANTHER" id="PTHR43406">
    <property type="entry name" value="TRYPTOPHAN SYNTHASE, ALPHA CHAIN"/>
    <property type="match status" value="1"/>
</dbReference>
<dbReference type="Pfam" id="PF00290">
    <property type="entry name" value="Trp_syntA"/>
    <property type="match status" value="1"/>
</dbReference>
<dbReference type="SUPFAM" id="SSF51366">
    <property type="entry name" value="Ribulose-phoshate binding barrel"/>
    <property type="match status" value="1"/>
</dbReference>
<dbReference type="PROSITE" id="PS00167">
    <property type="entry name" value="TRP_SYNTHASE_ALPHA"/>
    <property type="match status" value="1"/>
</dbReference>
<sequence length="268" mass="28579">MERYQQLFKQLAAKKEGAFVPFVQLGDPSPAMSLNIIDTLIAAGADALELGIPFSDPLADGPTIQNAALRAFAAGVTPGICFEILAEIRQKHPTIPIGLLMYANLVFHNGIDHFYQRCAEVGVDSVLIADVPFEESAPFRAAALRHGIAPIFICPPNADDDLLREIASHGRGYTYLLSRAGVTGAENHGQLPLNHLVDKLREYNAAPALQGFGISEPAQVKASLAAGAAGAISGSAIVKIIEKNVAQPVEMLVQLTRFVTEMKAATRS</sequence>
<protein>
    <recommendedName>
        <fullName evidence="1">Tryptophan synthase alpha chain</fullName>
        <ecNumber evidence="1">4.2.1.20</ecNumber>
    </recommendedName>
</protein>
<gene>
    <name evidence="1" type="primary">trpA</name>
    <name type="ordered locus">YPO2203</name>
    <name type="ordered locus">y2047</name>
    <name type="ordered locus">YP_2001</name>
</gene>
<name>TRPA_YERPE</name>
<reference key="1">
    <citation type="journal article" date="2001" name="Nature">
        <title>Genome sequence of Yersinia pestis, the causative agent of plague.</title>
        <authorList>
            <person name="Parkhill J."/>
            <person name="Wren B.W."/>
            <person name="Thomson N.R."/>
            <person name="Titball R.W."/>
            <person name="Holden M.T.G."/>
            <person name="Prentice M.B."/>
            <person name="Sebaihia M."/>
            <person name="James K.D."/>
            <person name="Churcher C.M."/>
            <person name="Mungall K.L."/>
            <person name="Baker S."/>
            <person name="Basham D."/>
            <person name="Bentley S.D."/>
            <person name="Brooks K."/>
            <person name="Cerdeno-Tarraga A.-M."/>
            <person name="Chillingworth T."/>
            <person name="Cronin A."/>
            <person name="Davies R.M."/>
            <person name="Davis P."/>
            <person name="Dougan G."/>
            <person name="Feltwell T."/>
            <person name="Hamlin N."/>
            <person name="Holroyd S."/>
            <person name="Jagels K."/>
            <person name="Karlyshev A.V."/>
            <person name="Leather S."/>
            <person name="Moule S."/>
            <person name="Oyston P.C.F."/>
            <person name="Quail M.A."/>
            <person name="Rutherford K.M."/>
            <person name="Simmonds M."/>
            <person name="Skelton J."/>
            <person name="Stevens K."/>
            <person name="Whitehead S."/>
            <person name="Barrell B.G."/>
        </authorList>
    </citation>
    <scope>NUCLEOTIDE SEQUENCE [LARGE SCALE GENOMIC DNA]</scope>
    <source>
        <strain>CO-92 / Biovar Orientalis</strain>
    </source>
</reference>
<reference key="2">
    <citation type="journal article" date="2002" name="J. Bacteriol.">
        <title>Genome sequence of Yersinia pestis KIM.</title>
        <authorList>
            <person name="Deng W."/>
            <person name="Burland V."/>
            <person name="Plunkett G. III"/>
            <person name="Boutin A."/>
            <person name="Mayhew G.F."/>
            <person name="Liss P."/>
            <person name="Perna N.T."/>
            <person name="Rose D.J."/>
            <person name="Mau B."/>
            <person name="Zhou S."/>
            <person name="Schwartz D.C."/>
            <person name="Fetherston J.D."/>
            <person name="Lindler L.E."/>
            <person name="Brubaker R.R."/>
            <person name="Plano G.V."/>
            <person name="Straley S.C."/>
            <person name="McDonough K.A."/>
            <person name="Nilles M.L."/>
            <person name="Matson J.S."/>
            <person name="Blattner F.R."/>
            <person name="Perry R.D."/>
        </authorList>
    </citation>
    <scope>NUCLEOTIDE SEQUENCE [LARGE SCALE GENOMIC DNA]</scope>
    <source>
        <strain>KIM10+ / Biovar Mediaevalis</strain>
    </source>
</reference>
<reference key="3">
    <citation type="journal article" date="2004" name="DNA Res.">
        <title>Complete genome sequence of Yersinia pestis strain 91001, an isolate avirulent to humans.</title>
        <authorList>
            <person name="Song Y."/>
            <person name="Tong Z."/>
            <person name="Wang J."/>
            <person name="Wang L."/>
            <person name="Guo Z."/>
            <person name="Han Y."/>
            <person name="Zhang J."/>
            <person name="Pei D."/>
            <person name="Zhou D."/>
            <person name="Qin H."/>
            <person name="Pang X."/>
            <person name="Han Y."/>
            <person name="Zhai J."/>
            <person name="Li M."/>
            <person name="Cui B."/>
            <person name="Qi Z."/>
            <person name="Jin L."/>
            <person name="Dai R."/>
            <person name="Chen F."/>
            <person name="Li S."/>
            <person name="Ye C."/>
            <person name="Du Z."/>
            <person name="Lin W."/>
            <person name="Wang J."/>
            <person name="Yu J."/>
            <person name="Yang H."/>
            <person name="Wang J."/>
            <person name="Huang P."/>
            <person name="Yang R."/>
        </authorList>
    </citation>
    <scope>NUCLEOTIDE SEQUENCE [LARGE SCALE GENOMIC DNA]</scope>
    <source>
        <strain>91001 / Biovar Mediaevalis</strain>
    </source>
</reference>
<feature type="chain" id="PRO_0000098880" description="Tryptophan synthase alpha chain">
    <location>
        <begin position="1"/>
        <end position="268"/>
    </location>
</feature>
<feature type="active site" description="Proton acceptor" evidence="1">
    <location>
        <position position="49"/>
    </location>
</feature>
<feature type="active site" description="Proton acceptor" evidence="1">
    <location>
        <position position="60"/>
    </location>
</feature>
<feature type="sequence conflict" description="In Ref. 2; AAM85612." evidence="2" ref="2">
    <original>QLTRFVTEMKAATRS</original>
    <variation>HANPLRHRDESGNPQLVIIYNWLLLRVSYRLELITIYR</variation>
    <location>
        <begin position="254"/>
        <end position="268"/>
    </location>
</feature>
<keyword id="KW-0028">Amino-acid biosynthesis</keyword>
<keyword id="KW-0057">Aromatic amino acid biosynthesis</keyword>
<keyword id="KW-0456">Lyase</keyword>
<keyword id="KW-1185">Reference proteome</keyword>
<keyword id="KW-0822">Tryptophan biosynthesis</keyword>
<proteinExistence type="inferred from homology"/>
<comment type="function">
    <text evidence="1">The alpha subunit is responsible for the aldol cleavage of indoleglycerol phosphate to indole and glyceraldehyde 3-phosphate.</text>
</comment>
<comment type="catalytic activity">
    <reaction evidence="1">
        <text>(1S,2R)-1-C-(indol-3-yl)glycerol 3-phosphate + L-serine = D-glyceraldehyde 3-phosphate + L-tryptophan + H2O</text>
        <dbReference type="Rhea" id="RHEA:10532"/>
        <dbReference type="ChEBI" id="CHEBI:15377"/>
        <dbReference type="ChEBI" id="CHEBI:33384"/>
        <dbReference type="ChEBI" id="CHEBI:57912"/>
        <dbReference type="ChEBI" id="CHEBI:58866"/>
        <dbReference type="ChEBI" id="CHEBI:59776"/>
        <dbReference type="EC" id="4.2.1.20"/>
    </reaction>
</comment>
<comment type="pathway">
    <text evidence="1">Amino-acid biosynthesis; L-tryptophan biosynthesis; L-tryptophan from chorismate: step 5/5.</text>
</comment>
<comment type="subunit">
    <text evidence="1">Tetramer of two alpha and two beta chains.</text>
</comment>
<comment type="similarity">
    <text evidence="1">Belongs to the TrpA family.</text>
</comment>
<accession>Q8ZEH0</accession>
<accession>Q0WEW4</accession>
<evidence type="ECO:0000255" key="1">
    <source>
        <dbReference type="HAMAP-Rule" id="MF_00131"/>
    </source>
</evidence>
<evidence type="ECO:0000305" key="2"/>
<organism>
    <name type="scientific">Yersinia pestis</name>
    <dbReference type="NCBI Taxonomy" id="632"/>
    <lineage>
        <taxon>Bacteria</taxon>
        <taxon>Pseudomonadati</taxon>
        <taxon>Pseudomonadota</taxon>
        <taxon>Gammaproteobacteria</taxon>
        <taxon>Enterobacterales</taxon>
        <taxon>Yersiniaceae</taxon>
        <taxon>Yersinia</taxon>
    </lineage>
</organism>